<organism evidence="11">
    <name type="scientific">Sesamum indicum</name>
    <name type="common">Oriental sesame</name>
    <name type="synonym">Sesamum orientale</name>
    <dbReference type="NCBI Taxonomy" id="4182"/>
    <lineage>
        <taxon>Eukaryota</taxon>
        <taxon>Viridiplantae</taxon>
        <taxon>Streptophyta</taxon>
        <taxon>Embryophyta</taxon>
        <taxon>Tracheophyta</taxon>
        <taxon>Spermatophyta</taxon>
        <taxon>Magnoliopsida</taxon>
        <taxon>eudicotyledons</taxon>
        <taxon>Gunneridae</taxon>
        <taxon>Pentapetalae</taxon>
        <taxon>asterids</taxon>
        <taxon>lamiids</taxon>
        <taxon>Lamiales</taxon>
        <taxon>Pedaliaceae</taxon>
        <taxon>Sesamum</taxon>
    </lineage>
</organism>
<reference evidence="11" key="1">
    <citation type="journal article" date="1997" name="J. Biochem.">
        <title>Cloning, expression and isoform classification of a minor oleosin in sesame oil bodies.</title>
        <authorList>
            <person name="Chen J.C."/>
            <person name="Lin R.H."/>
            <person name="Huang H.C."/>
            <person name="Tzen J.T."/>
        </authorList>
    </citation>
    <scope>NUCLEOTIDE SEQUENCE [MRNA]</scope>
    <scope>SUBCELLULAR LOCATION</scope>
    <scope>TISSUE SPECIFICITY</scope>
    <source>
        <strain evidence="8">cv. Tainan 1</strain>
        <tissue evidence="8">Seed</tissue>
    </source>
</reference>
<reference key="2">
    <citation type="journal article" date="2002" name="Biosci. Biotechnol. Biochem.">
        <title>Gene family of oleosin isoforms and their structural stabilization in sesame seed oil bodies.</title>
        <authorList>
            <person name="Tai S.S."/>
            <person name="Chen M.C."/>
            <person name="Peng C.C."/>
            <person name="Tzen J.T."/>
        </authorList>
    </citation>
    <scope>SUBCELLULAR LOCATION</scope>
    <scope>TISSUE SPECIFICITY</scope>
    <scope>DEVELOPMENTAL STAGE</scope>
</reference>
<name>OLEH2_SESIN</name>
<dbReference type="EMBL" id="U97700">
    <property type="protein sequence ID" value="AAB58402.1"/>
    <property type="molecule type" value="mRNA"/>
</dbReference>
<dbReference type="PIR" id="JC5703">
    <property type="entry name" value="JC5703"/>
</dbReference>
<dbReference type="FunCoup" id="O04925">
    <property type="interactions" value="344"/>
</dbReference>
<dbReference type="InParanoid" id="O04925"/>
<dbReference type="Proteomes" id="UP000504604">
    <property type="component" value="Unplaced"/>
</dbReference>
<dbReference type="GO" id="GO:0016020">
    <property type="term" value="C:membrane"/>
    <property type="evidence" value="ECO:0007669"/>
    <property type="project" value="UniProtKB-SubCell"/>
</dbReference>
<dbReference type="GO" id="GO:0012511">
    <property type="term" value="C:monolayer-surrounded lipid storage body"/>
    <property type="evidence" value="ECO:0000314"/>
    <property type="project" value="UniProtKB"/>
</dbReference>
<dbReference type="GO" id="GO:0034389">
    <property type="term" value="P:lipid droplet organization"/>
    <property type="evidence" value="ECO:0000305"/>
    <property type="project" value="UniProtKB"/>
</dbReference>
<dbReference type="GO" id="GO:0019915">
    <property type="term" value="P:lipid storage"/>
    <property type="evidence" value="ECO:0000305"/>
    <property type="project" value="UniProtKB"/>
</dbReference>
<dbReference type="GO" id="GO:0050826">
    <property type="term" value="P:response to freezing"/>
    <property type="evidence" value="ECO:0007669"/>
    <property type="project" value="TreeGrafter"/>
</dbReference>
<dbReference type="GO" id="GO:0010431">
    <property type="term" value="P:seed maturation"/>
    <property type="evidence" value="ECO:0000270"/>
    <property type="project" value="UniProtKB"/>
</dbReference>
<dbReference type="GO" id="GO:0010344">
    <property type="term" value="P:seed oilbody biogenesis"/>
    <property type="evidence" value="ECO:0007669"/>
    <property type="project" value="TreeGrafter"/>
</dbReference>
<dbReference type="InterPro" id="IPR000136">
    <property type="entry name" value="Oleosin"/>
</dbReference>
<dbReference type="PANTHER" id="PTHR33203">
    <property type="entry name" value="OLEOSIN"/>
    <property type="match status" value="1"/>
</dbReference>
<dbReference type="PANTHER" id="PTHR33203:SF44">
    <property type="entry name" value="OLEOSIN 20.3 KDA"/>
    <property type="match status" value="1"/>
</dbReference>
<dbReference type="Pfam" id="PF01277">
    <property type="entry name" value="Oleosin"/>
    <property type="match status" value="1"/>
</dbReference>
<dbReference type="PROSITE" id="PS00811">
    <property type="entry name" value="OLEOSINS"/>
    <property type="match status" value="1"/>
</dbReference>
<keyword id="KW-0007">Acetylation</keyword>
<keyword id="KW-0551">Lipid droplet</keyword>
<keyword id="KW-0472">Membrane</keyword>
<keyword id="KW-1185">Reference proteome</keyword>
<keyword id="KW-0812">Transmembrane</keyword>
<keyword id="KW-1133">Transmembrane helix</keyword>
<comment type="function">
    <text evidence="9">May have a structural role to stabilize the lipid body during desiccation of the seed by preventing coalescence of the oil. Probably interacts with both lipid and phospholipid moieties of lipid bodies. May also provide recognition signals for specific lipase anchorage in lipolysis during seedling growth.</text>
</comment>
<comment type="subcellular location">
    <subcellularLocation>
        <location evidence="3 5 6">Lipid droplet</location>
    </subcellularLocation>
    <subcellularLocation>
        <location evidence="3">Membrane</location>
        <topology evidence="3">Multi-pass membrane protein</topology>
    </subcellularLocation>
    <text evidence="9">Surface of oil bodies. Oleosins exist at a monolayer lipid/water interface.</text>
</comment>
<comment type="tissue specificity">
    <text evidence="5 6">Expressed in seeds (at protein level).</text>
</comment>
<comment type="developmental stage">
    <text evidence="5">Expressed during seed maturation. Expressed in maturing seeds about 2 and half weeks after flowering. Expression continues steadily thereafter until it decreases in the seed-drying stage, reaching undetectable levels in mature seeds.</text>
</comment>
<comment type="domain">
    <text evidence="9">The proline-knot motif may be involved in the targeting to oil bodies.</text>
</comment>
<comment type="similarity">
    <text evidence="3">Belongs to the oleosin family.</text>
</comment>
<feature type="initiator methionine" description="Removed" evidence="1">
    <location>
        <position position="1"/>
    </location>
</feature>
<feature type="chain" id="PRO_0000449964" description="Oleosin H2">
    <location>
        <begin position="2"/>
        <end position="144"/>
    </location>
</feature>
<feature type="transmembrane region" description="Helical" evidence="2">
    <location>
        <begin position="28"/>
        <end position="48"/>
    </location>
</feature>
<feature type="transmembrane region" description="Helical" evidence="2">
    <location>
        <begin position="53"/>
        <end position="73"/>
    </location>
</feature>
<feature type="transmembrane region" description="Helical" evidence="2">
    <location>
        <begin position="75"/>
        <end position="95"/>
    </location>
</feature>
<feature type="region of interest" description="Disordered" evidence="4">
    <location>
        <begin position="124"/>
        <end position="144"/>
    </location>
</feature>
<feature type="short sequence motif" description="Proline-knot" evidence="10">
    <location>
        <begin position="61"/>
        <end position="72"/>
    </location>
</feature>
<feature type="modified residue" description="N-acetylalanine" evidence="1">
    <location>
        <position position="2"/>
    </location>
</feature>
<accession>O04925</accession>
<sequence length="144" mass="15446">MADEPHDQRPTDVIKSYLPEKGPSTSQVLAVVTLFPLGAVLLCLAGLILTGTIIGLAVATPLFVIFSPILVPAALTIALAVTGFLTSGAFGITALSSISWLLNYVRRMRGSLPEQLDHARRRVQETVGQKTREAGQRSQDVIRP</sequence>
<evidence type="ECO:0000250" key="1">
    <source>
        <dbReference type="UniProtKB" id="C3S7F0"/>
    </source>
</evidence>
<evidence type="ECO:0000255" key="2"/>
<evidence type="ECO:0000255" key="3">
    <source>
        <dbReference type="RuleBase" id="RU000540"/>
    </source>
</evidence>
<evidence type="ECO:0000256" key="4">
    <source>
        <dbReference type="SAM" id="MobiDB-lite"/>
    </source>
</evidence>
<evidence type="ECO:0000269" key="5">
    <source>
    </source>
</evidence>
<evidence type="ECO:0000269" key="6">
    <source>
    </source>
</evidence>
<evidence type="ECO:0000303" key="7">
    <source>
    </source>
</evidence>
<evidence type="ECO:0000303" key="8">
    <source>
    </source>
</evidence>
<evidence type="ECO:0000305" key="9"/>
<evidence type="ECO:0000305" key="10">
    <source>
    </source>
</evidence>
<evidence type="ECO:0000312" key="11">
    <source>
        <dbReference type="EMBL" id="AAB58402.1"/>
    </source>
</evidence>
<protein>
    <recommendedName>
        <fullName evidence="7">Oleosin H2</fullName>
    </recommendedName>
    <alternativeName>
        <fullName evidence="7 8">Oleosin 15.5 kDa</fullName>
    </alternativeName>
</protein>
<proteinExistence type="evidence at protein level"/>